<sequence length="620" mass="66200">MAAAATPGAKRPADPARDPDSPPKRPRPNSLDLATVFGPRPAPPRPTSPGAPGSHWPQSPPRGQPDGGAPGEKARPASPALSEASSGPPTPDIPLSPGGAHAIDPDCSPGPPDPDPMWSASAIPNALPPHILAETFERHLRGLLRGVRSPLAIGPLWARLDYLCSLVVSLEAAGMVDRGLGRHLWRLTRRAPPSAAEAVAPRPLMGFYEAATQNQADCQLWALLRRGLTTASTLRWGAQGPCFSSQWLTHNASLRLDAQSSAVMFGRVNEPTARNLLFRYCVGRADAGVNDDADAGRFVFHQPGDLAEENVHACGVLMDGHTGMVGASLDILVCPRDPHGYLAPAPQTPLAFYEVKCRAKYAFDPADPGAPAASAYEDLMARRSPEAFRAFIRSIPNPGVRYFAPGRVPGPEEALVTQDRDWLDSRAAGEKRRCSAPDRALVELNSGVVSEVLLFGVPDLERRTISPVAWSSGELVRREPIFANPRHPNFKQILVQGYVLDSHFPDCPLQPHLVTFLGRHRAGAEEGVTFRLEDGRGAPAGRGGAPGPAKASILPDQAVPIALIITPVRVEPGIYRDIRRNSRLAFDDTLAKLWASRSPGRGPAAADTTSSPPTAGRSSR</sequence>
<reference key="1">
    <citation type="journal article" date="1986" name="J. Virol.">
        <title>Characterization of the genes encoding herpes simplex virus type 1 and type 2 alkaline exonucleases and overlapping proteins.</title>
        <authorList>
            <person name="Draper K.G."/>
            <person name="Devi-Rao G."/>
            <person name="Costa R.H."/>
            <person name="Blair E.D."/>
            <person name="Thompson R.L."/>
            <person name="Wagner E.K."/>
        </authorList>
    </citation>
    <scope>NUCLEOTIDE SEQUENCE [GENOMIC DNA]</scope>
</reference>
<name>AN_HHV2</name>
<dbReference type="EC" id="3.1.-.-" evidence="1"/>
<dbReference type="EMBL" id="M11854">
    <property type="protein sequence ID" value="AAA45834.1"/>
    <property type="molecule type" value="Genomic_DNA"/>
</dbReference>
<dbReference type="EMBL" id="M11854">
    <property type="protein sequence ID" value="AAA45835.1"/>
    <property type="status" value="ALT_INIT"/>
    <property type="molecule type" value="Genomic_DNA"/>
</dbReference>
<dbReference type="RefSeq" id="YP_009137163.1">
    <property type="nucleotide sequence ID" value="NC_001798.2"/>
</dbReference>
<dbReference type="SMR" id="P06489"/>
<dbReference type="DNASU" id="1487295"/>
<dbReference type="GeneID" id="1487295"/>
<dbReference type="KEGG" id="vg:1487295"/>
<dbReference type="OrthoDB" id="4574at10239"/>
<dbReference type="GO" id="GO:0030430">
    <property type="term" value="C:host cell cytoplasm"/>
    <property type="evidence" value="ECO:0007669"/>
    <property type="project" value="UniProtKB-SubCell"/>
</dbReference>
<dbReference type="GO" id="GO:0042025">
    <property type="term" value="C:host cell nucleus"/>
    <property type="evidence" value="ECO:0007669"/>
    <property type="project" value="UniProtKB-SubCell"/>
</dbReference>
<dbReference type="GO" id="GO:0003677">
    <property type="term" value="F:DNA binding"/>
    <property type="evidence" value="ECO:0007669"/>
    <property type="project" value="InterPro"/>
</dbReference>
<dbReference type="GO" id="GO:0004519">
    <property type="term" value="F:endonuclease activity"/>
    <property type="evidence" value="ECO:0007669"/>
    <property type="project" value="UniProtKB-KW"/>
</dbReference>
<dbReference type="GO" id="GO:0004527">
    <property type="term" value="F:exonuclease activity"/>
    <property type="evidence" value="ECO:0007669"/>
    <property type="project" value="UniProtKB-KW"/>
</dbReference>
<dbReference type="HAMAP" id="MF_04009">
    <property type="entry name" value="HSV_AN"/>
    <property type="match status" value="1"/>
</dbReference>
<dbReference type="InterPro" id="IPR001616">
    <property type="entry name" value="Herpes_alk_exo"/>
</dbReference>
<dbReference type="InterPro" id="IPR011335">
    <property type="entry name" value="Restrct_endonuc-II-like"/>
</dbReference>
<dbReference type="InterPro" id="IPR034720">
    <property type="entry name" value="Viral_alk_exo"/>
</dbReference>
<dbReference type="Pfam" id="PF01771">
    <property type="entry name" value="Viral_alk_exo"/>
    <property type="match status" value="1"/>
</dbReference>
<dbReference type="PRINTS" id="PR00924">
    <property type="entry name" value="ALKEXNUCLASE"/>
</dbReference>
<dbReference type="SUPFAM" id="SSF52980">
    <property type="entry name" value="Restriction endonuclease-like"/>
    <property type="match status" value="1"/>
</dbReference>
<feature type="chain" id="PRO_0000115691" description="Alkaline nuclease">
    <location>
        <begin position="1"/>
        <end position="620"/>
    </location>
</feature>
<feature type="region of interest" description="Disordered" evidence="2">
    <location>
        <begin position="1"/>
        <end position="122"/>
    </location>
</feature>
<feature type="region of interest" description="Disordered" evidence="2">
    <location>
        <begin position="595"/>
        <end position="620"/>
    </location>
</feature>
<feature type="compositionally biased region" description="Low complexity" evidence="2">
    <location>
        <begin position="1"/>
        <end position="10"/>
    </location>
</feature>
<feature type="compositionally biased region" description="Basic and acidic residues" evidence="2">
    <location>
        <begin position="11"/>
        <end position="23"/>
    </location>
</feature>
<feature type="compositionally biased region" description="Pro residues" evidence="2">
    <location>
        <begin position="40"/>
        <end position="49"/>
    </location>
</feature>
<feature type="compositionally biased region" description="Low complexity" evidence="2">
    <location>
        <begin position="603"/>
        <end position="620"/>
    </location>
</feature>
<feature type="site" description="Required for function" evidence="1">
    <location>
        <position position="270"/>
    </location>
</feature>
<feature type="site" description="Required for function" evidence="1">
    <location>
        <position position="330"/>
    </location>
</feature>
<feature type="site" description="Required for function" evidence="1">
    <location>
        <position position="354"/>
    </location>
</feature>
<feature type="site" description="Required for function" evidence="1">
    <location>
        <position position="356"/>
    </location>
</feature>
<proteinExistence type="inferred from homology"/>
<organismHost>
    <name type="scientific">Homo sapiens</name>
    <name type="common">Human</name>
    <dbReference type="NCBI Taxonomy" id="9606"/>
</organismHost>
<comment type="function">
    <text evidence="1">Plays a role in processing non linear or branched viral DNA intermediates in order to promote the production of mature packaged unit-length linear progeny viral DNA molecules. Exhibits endonuclease and exonuclease activities and accepts both double-stranded and single-stranded DNA as substrate. Exonuclease digestion of DNA is in the 5'-&gt; 3' direction and the products are 5'-monophosphate nucleosides. Additionally, forms a recombinase with the major DNA-binding protein, which displays strand exchange activity.</text>
</comment>
<comment type="subunit">
    <text evidence="1">Interacts with major DNA-binding protein; this interaction increases the nuclease processivity of the alkaline exonuclease.</text>
</comment>
<comment type="subcellular location">
    <subcellularLocation>
        <location evidence="1">Host nucleus</location>
    </subcellularLocation>
    <subcellularLocation>
        <location evidence="1">Host cytoplasm</location>
    </subcellularLocation>
</comment>
<comment type="similarity">
    <text evidence="1">Belongs to the herpesviridae alkaline nuclease family.</text>
</comment>
<comment type="sequence caution" evidence="3">
    <conflict type="erroneous initiation">
        <sequence resource="EMBL-CDS" id="AAA45835"/>
    </conflict>
</comment>
<evidence type="ECO:0000255" key="1">
    <source>
        <dbReference type="HAMAP-Rule" id="MF_04009"/>
    </source>
</evidence>
<evidence type="ECO:0000256" key="2">
    <source>
        <dbReference type="SAM" id="MobiDB-lite"/>
    </source>
</evidence>
<evidence type="ECO:0000305" key="3"/>
<organism>
    <name type="scientific">Human herpesvirus 2</name>
    <name type="common">HHV-2</name>
    <name type="synonym">Human herpes simplex virus 2</name>
    <dbReference type="NCBI Taxonomy" id="10310"/>
    <lineage>
        <taxon>Viruses</taxon>
        <taxon>Duplodnaviria</taxon>
        <taxon>Heunggongvirae</taxon>
        <taxon>Peploviricota</taxon>
        <taxon>Herviviricetes</taxon>
        <taxon>Herpesvirales</taxon>
        <taxon>Orthoherpesviridae</taxon>
        <taxon>Alphaherpesvirinae</taxon>
        <taxon>Simplexvirus</taxon>
        <taxon>Simplexvirus humanalpha2</taxon>
    </lineage>
</organism>
<protein>
    <recommendedName>
        <fullName evidence="1">Alkaline nuclease</fullName>
        <ecNumber evidence="1">3.1.-.-</ecNumber>
    </recommendedName>
</protein>
<accession>P06489</accession>
<accession>Q69352</accession>
<keyword id="KW-0255">Endonuclease</keyword>
<keyword id="KW-0269">Exonuclease</keyword>
<keyword id="KW-1035">Host cytoplasm</keyword>
<keyword id="KW-1048">Host nucleus</keyword>
<keyword id="KW-0945">Host-virus interaction</keyword>
<keyword id="KW-0378">Hydrolase</keyword>
<keyword id="KW-0540">Nuclease</keyword>
<gene>
    <name type="ORF">UL12</name>
</gene>